<reference key="1">
    <citation type="journal article" date="2002" name="Nature">
        <title>Genome sequence of the plant pathogen Ralstonia solanacearum.</title>
        <authorList>
            <person name="Salanoubat M."/>
            <person name="Genin S."/>
            <person name="Artiguenave F."/>
            <person name="Gouzy J."/>
            <person name="Mangenot S."/>
            <person name="Arlat M."/>
            <person name="Billault A."/>
            <person name="Brottier P."/>
            <person name="Camus J.-C."/>
            <person name="Cattolico L."/>
            <person name="Chandler M."/>
            <person name="Choisne N."/>
            <person name="Claudel-Renard C."/>
            <person name="Cunnac S."/>
            <person name="Demange N."/>
            <person name="Gaspin C."/>
            <person name="Lavie M."/>
            <person name="Moisan A."/>
            <person name="Robert C."/>
            <person name="Saurin W."/>
            <person name="Schiex T."/>
            <person name="Siguier P."/>
            <person name="Thebault P."/>
            <person name="Whalen M."/>
            <person name="Wincker P."/>
            <person name="Levy M."/>
            <person name="Weissenbach J."/>
            <person name="Boucher C.A."/>
        </authorList>
    </citation>
    <scope>NUCLEOTIDE SEQUENCE [LARGE SCALE GENOMIC DNA]</scope>
    <source>
        <strain>ATCC BAA-1114 / GMI1000</strain>
    </source>
</reference>
<protein>
    <recommendedName>
        <fullName evidence="1">Homoserine O-succinyltransferase</fullName>
        <shortName evidence="1">HST</shortName>
        <ecNumber evidence="1">2.3.1.46</ecNumber>
    </recommendedName>
    <alternativeName>
        <fullName evidence="1">Homoserine transsuccinylase</fullName>
        <shortName evidence="1">HTS</shortName>
    </alternativeName>
</protein>
<evidence type="ECO:0000255" key="1">
    <source>
        <dbReference type="HAMAP-Rule" id="MF_00296"/>
    </source>
</evidence>
<evidence type="ECO:0000256" key="2">
    <source>
        <dbReference type="SAM" id="MobiDB-lite"/>
    </source>
</evidence>
<keyword id="KW-0012">Acyltransferase</keyword>
<keyword id="KW-0028">Amino-acid biosynthesis</keyword>
<keyword id="KW-0963">Cytoplasm</keyword>
<keyword id="KW-0486">Methionine biosynthesis</keyword>
<keyword id="KW-1185">Reference proteome</keyword>
<keyword id="KW-0808">Transferase</keyword>
<sequence>MTELQVDPAASADPAAAADTPRHPAATLPPDSVGLVVPERMHFAEPLPLRNGSQLVGYDLMVETYGTLNAERSNAVLICHALNASHHVAGVHAEGEVGWWDNMVGPGKPVDTNRFFVIGVNNLGSCFGSTGPMSPHPQTGQPYGARFPVVTVEDWVNAQARVADRFGIRQFAAVMGGSLGGMQALAWSLMYPERVRHCVVVASTPKLSAQNIAFNEVARSAILSDPDFHGGDYYAHNVKPKRGLRVARMIGHITYLSDEDMAEKFGRELKAEDIRFSFDVEFQVESYLRYQGDKFAEYFDANTYLLITRALDYFDPALAYEGSLTRAVAHTRASYLVVSFTTDWRFAPARSRELVKALLDNKRPVTYGEIDAPHGHDAFLLEDARYHALVRAYYERIAQEIGA</sequence>
<proteinExistence type="inferred from homology"/>
<dbReference type="EC" id="2.3.1.46" evidence="1"/>
<dbReference type="EMBL" id="AL646052">
    <property type="protein sequence ID" value="CAD13555.1"/>
    <property type="molecule type" value="Genomic_DNA"/>
</dbReference>
<dbReference type="SMR" id="Q8Y3F3"/>
<dbReference type="STRING" id="267608.RSc0027"/>
<dbReference type="ESTHER" id="ralso-METX">
    <property type="family name" value="Homoserine_transacetylase"/>
</dbReference>
<dbReference type="DNASU" id="1218829"/>
<dbReference type="EnsemblBacteria" id="CAD13555">
    <property type="protein sequence ID" value="CAD13555"/>
    <property type="gene ID" value="RSc0027"/>
</dbReference>
<dbReference type="KEGG" id="rso:RSc0027"/>
<dbReference type="eggNOG" id="COG2021">
    <property type="taxonomic scope" value="Bacteria"/>
</dbReference>
<dbReference type="HOGENOM" id="CLU_028760_1_2_4"/>
<dbReference type="UniPathway" id="UPA00051">
    <property type="reaction ID" value="UER00075"/>
</dbReference>
<dbReference type="Proteomes" id="UP000001436">
    <property type="component" value="Chromosome"/>
</dbReference>
<dbReference type="GO" id="GO:0005737">
    <property type="term" value="C:cytoplasm"/>
    <property type="evidence" value="ECO:0007669"/>
    <property type="project" value="UniProtKB-SubCell"/>
</dbReference>
<dbReference type="GO" id="GO:0004414">
    <property type="term" value="F:homoserine O-acetyltransferase activity"/>
    <property type="evidence" value="ECO:0007669"/>
    <property type="project" value="TreeGrafter"/>
</dbReference>
<dbReference type="GO" id="GO:0008899">
    <property type="term" value="F:homoserine O-succinyltransferase activity"/>
    <property type="evidence" value="ECO:0007669"/>
    <property type="project" value="UniProtKB-UniRule"/>
</dbReference>
<dbReference type="GO" id="GO:0009092">
    <property type="term" value="P:homoserine metabolic process"/>
    <property type="evidence" value="ECO:0007669"/>
    <property type="project" value="TreeGrafter"/>
</dbReference>
<dbReference type="GO" id="GO:0009086">
    <property type="term" value="P:methionine biosynthetic process"/>
    <property type="evidence" value="ECO:0007669"/>
    <property type="project" value="UniProtKB-UniRule"/>
</dbReference>
<dbReference type="FunFam" id="1.10.1740.110:FF:000001">
    <property type="entry name" value="Homoserine O-acetyltransferase"/>
    <property type="match status" value="1"/>
</dbReference>
<dbReference type="Gene3D" id="1.10.1740.110">
    <property type="match status" value="1"/>
</dbReference>
<dbReference type="Gene3D" id="3.40.50.1820">
    <property type="entry name" value="alpha/beta hydrolase"/>
    <property type="match status" value="1"/>
</dbReference>
<dbReference type="HAMAP" id="MF_00296">
    <property type="entry name" value="MetX_acyltransf"/>
    <property type="match status" value="1"/>
</dbReference>
<dbReference type="InterPro" id="IPR000073">
    <property type="entry name" value="AB_hydrolase_1"/>
</dbReference>
<dbReference type="InterPro" id="IPR029058">
    <property type="entry name" value="AB_hydrolase_fold"/>
</dbReference>
<dbReference type="InterPro" id="IPR008220">
    <property type="entry name" value="HAT_MetX-like"/>
</dbReference>
<dbReference type="NCBIfam" id="TIGR01392">
    <property type="entry name" value="homoserO_Ac_trn"/>
    <property type="match status" value="1"/>
</dbReference>
<dbReference type="NCBIfam" id="NF001209">
    <property type="entry name" value="PRK00175.1"/>
    <property type="match status" value="1"/>
</dbReference>
<dbReference type="PANTHER" id="PTHR32268">
    <property type="entry name" value="HOMOSERINE O-ACETYLTRANSFERASE"/>
    <property type="match status" value="1"/>
</dbReference>
<dbReference type="PANTHER" id="PTHR32268:SF11">
    <property type="entry name" value="HOMOSERINE O-ACETYLTRANSFERASE"/>
    <property type="match status" value="1"/>
</dbReference>
<dbReference type="Pfam" id="PF00561">
    <property type="entry name" value="Abhydrolase_1"/>
    <property type="match status" value="1"/>
</dbReference>
<dbReference type="PIRSF" id="PIRSF000443">
    <property type="entry name" value="Homoser_Ac_trans"/>
    <property type="match status" value="1"/>
</dbReference>
<dbReference type="SUPFAM" id="SSF53474">
    <property type="entry name" value="alpha/beta-Hydrolases"/>
    <property type="match status" value="1"/>
</dbReference>
<feature type="chain" id="PRO_0000155740" description="Homoserine O-succinyltransferase">
    <location>
        <begin position="1"/>
        <end position="403"/>
    </location>
</feature>
<feature type="domain" description="AB hydrolase-1" evidence="1">
    <location>
        <begin position="74"/>
        <end position="383"/>
    </location>
</feature>
<feature type="region of interest" description="Disordered" evidence="2">
    <location>
        <begin position="1"/>
        <end position="31"/>
    </location>
</feature>
<feature type="compositionally biased region" description="Low complexity" evidence="2">
    <location>
        <begin position="7"/>
        <end position="26"/>
    </location>
</feature>
<feature type="active site" description="Nucleophile" evidence="1">
    <location>
        <position position="178"/>
    </location>
</feature>
<feature type="active site" evidence="1">
    <location>
        <position position="343"/>
    </location>
</feature>
<feature type="active site" evidence="1">
    <location>
        <position position="376"/>
    </location>
</feature>
<feature type="binding site" evidence="1">
    <location>
        <position position="248"/>
    </location>
    <ligand>
        <name>substrate</name>
    </ligand>
</feature>
<feature type="binding site" evidence="1">
    <location>
        <position position="377"/>
    </location>
    <ligand>
        <name>substrate</name>
    </ligand>
</feature>
<feature type="site" description="Important for acyl-CoA specificity" evidence="1">
    <location>
        <position position="345"/>
    </location>
</feature>
<organism>
    <name type="scientific">Ralstonia nicotianae (strain ATCC BAA-1114 / GMI1000)</name>
    <name type="common">Ralstonia solanacearum</name>
    <dbReference type="NCBI Taxonomy" id="267608"/>
    <lineage>
        <taxon>Bacteria</taxon>
        <taxon>Pseudomonadati</taxon>
        <taxon>Pseudomonadota</taxon>
        <taxon>Betaproteobacteria</taxon>
        <taxon>Burkholderiales</taxon>
        <taxon>Burkholderiaceae</taxon>
        <taxon>Ralstonia</taxon>
        <taxon>Ralstonia solanacearum species complex</taxon>
    </lineage>
</organism>
<name>METXS_RALN1</name>
<accession>Q8Y3F3</accession>
<comment type="function">
    <text evidence="1">Transfers a succinyl group from succinyl-CoA to L-homoserine, forming succinyl-L-homoserine.</text>
</comment>
<comment type="catalytic activity">
    <reaction evidence="1">
        <text>L-homoserine + succinyl-CoA = O-succinyl-L-homoserine + CoA</text>
        <dbReference type="Rhea" id="RHEA:22008"/>
        <dbReference type="ChEBI" id="CHEBI:57287"/>
        <dbReference type="ChEBI" id="CHEBI:57292"/>
        <dbReference type="ChEBI" id="CHEBI:57476"/>
        <dbReference type="ChEBI" id="CHEBI:57661"/>
        <dbReference type="EC" id="2.3.1.46"/>
    </reaction>
</comment>
<comment type="pathway">
    <text evidence="1">Amino-acid biosynthesis; L-methionine biosynthesis via de novo pathway; O-succinyl-L-homoserine from L-homoserine: step 1/1.</text>
</comment>
<comment type="subunit">
    <text evidence="1">Homodimer.</text>
</comment>
<comment type="subcellular location">
    <subcellularLocation>
        <location evidence="1">Cytoplasm</location>
    </subcellularLocation>
</comment>
<comment type="similarity">
    <text evidence="1">Belongs to the AB hydrolase superfamily. MetX family.</text>
</comment>
<gene>
    <name evidence="1" type="primary">metXS</name>
    <name type="ordered locus">RSc0027</name>
    <name type="ORF">RS01850</name>
</gene>